<gene>
    <name evidence="1" type="primary">nepI</name>
    <name type="ordered locus">c4586</name>
</gene>
<feature type="chain" id="PRO_0000294111" description="Purine ribonucleoside efflux pump NepI">
    <location>
        <begin position="1"/>
        <end position="396"/>
    </location>
</feature>
<feature type="topological domain" description="Cytoplasmic" evidence="1">
    <location>
        <begin position="1"/>
        <end position="21"/>
    </location>
</feature>
<feature type="transmembrane region" description="Helical" evidence="1">
    <location>
        <begin position="22"/>
        <end position="42"/>
    </location>
</feature>
<feature type="topological domain" description="Periplasmic" evidence="1">
    <location>
        <begin position="43"/>
        <end position="54"/>
    </location>
</feature>
<feature type="transmembrane region" description="Helical" evidence="1">
    <location>
        <begin position="55"/>
        <end position="75"/>
    </location>
</feature>
<feature type="topological domain" description="Cytoplasmic" evidence="1">
    <location>
        <begin position="76"/>
        <end position="85"/>
    </location>
</feature>
<feature type="transmembrane region" description="Helical" evidence="1">
    <location>
        <begin position="86"/>
        <end position="106"/>
    </location>
</feature>
<feature type="topological domain" description="Periplasmic" evidence="1">
    <location>
        <position position="107"/>
    </location>
</feature>
<feature type="transmembrane region" description="Helical" evidence="1">
    <location>
        <begin position="108"/>
        <end position="128"/>
    </location>
</feature>
<feature type="topological domain" description="Cytoplasmic" evidence="1">
    <location>
        <begin position="129"/>
        <end position="147"/>
    </location>
</feature>
<feature type="transmembrane region" description="Helical" evidence="1">
    <location>
        <begin position="148"/>
        <end position="168"/>
    </location>
</feature>
<feature type="topological domain" description="Periplasmic" evidence="1">
    <location>
        <begin position="169"/>
        <end position="175"/>
    </location>
</feature>
<feature type="transmembrane region" description="Helical" evidence="1">
    <location>
        <begin position="176"/>
        <end position="196"/>
    </location>
</feature>
<feature type="topological domain" description="Cytoplasmic" evidence="1">
    <location>
        <begin position="197"/>
        <end position="215"/>
    </location>
</feature>
<feature type="transmembrane region" description="Helical" evidence="1">
    <location>
        <begin position="216"/>
        <end position="236"/>
    </location>
</feature>
<feature type="topological domain" description="Periplasmic" evidence="1">
    <location>
        <begin position="237"/>
        <end position="255"/>
    </location>
</feature>
<feature type="transmembrane region" description="Helical" evidence="1">
    <location>
        <begin position="256"/>
        <end position="276"/>
    </location>
</feature>
<feature type="topological domain" description="Cytoplasmic" evidence="1">
    <location>
        <begin position="277"/>
        <end position="281"/>
    </location>
</feature>
<feature type="transmembrane region" description="Helical" evidence="1">
    <location>
        <begin position="282"/>
        <end position="302"/>
    </location>
</feature>
<feature type="topological domain" description="Periplasmic" evidence="1">
    <location>
        <begin position="303"/>
        <end position="305"/>
    </location>
</feature>
<feature type="transmembrane region" description="Helical" evidence="1">
    <location>
        <begin position="306"/>
        <end position="326"/>
    </location>
</feature>
<feature type="topological domain" description="Cytoplasmic" evidence="1">
    <location>
        <begin position="327"/>
        <end position="343"/>
    </location>
</feature>
<feature type="transmembrane region" description="Helical" evidence="1">
    <location>
        <begin position="344"/>
        <end position="364"/>
    </location>
</feature>
<feature type="topological domain" description="Periplasmic" evidence="1">
    <location>
        <begin position="365"/>
        <end position="366"/>
    </location>
</feature>
<feature type="transmembrane region" description="Helical" evidence="1">
    <location>
        <begin position="367"/>
        <end position="387"/>
    </location>
</feature>
<feature type="topological domain" description="Cytoplasmic" evidence="1">
    <location>
        <begin position="388"/>
        <end position="396"/>
    </location>
</feature>
<protein>
    <recommendedName>
        <fullName evidence="1">Purine ribonucleoside efflux pump NepI</fullName>
    </recommendedName>
</protein>
<proteinExistence type="inferred from homology"/>
<keyword id="KW-0050">Antiport</keyword>
<keyword id="KW-0997">Cell inner membrane</keyword>
<keyword id="KW-1003">Cell membrane</keyword>
<keyword id="KW-0472">Membrane</keyword>
<keyword id="KW-1185">Reference proteome</keyword>
<keyword id="KW-0812">Transmembrane</keyword>
<keyword id="KW-1133">Transmembrane helix</keyword>
<keyword id="KW-0813">Transport</keyword>
<evidence type="ECO:0000255" key="1">
    <source>
        <dbReference type="HAMAP-Rule" id="MF_01189"/>
    </source>
</evidence>
<evidence type="ECO:0000305" key="2"/>
<sequence>MSEFIAENRGANAITRPNWSAVFSVAFCVACLIIVEFLPVSLLTPMAQDLGISEGVAGQSVTVTAFVAMFASLFITQTIQATDRRYVVILFAVLLTLSCLLVSFANSFSLLLIGRACLGLALGGFWAMSASLTMRLVPPRTVPKALSVIFGAVSIALVIAAPLGSFLGELIGWRNVFNAAAAMGVLCIFWIIKSLPSLPGEPSHQKQNTFRLLQRPGVMAGMIAIFMSFAGQFAFFTYIRPVYMNLAGFGVDGLTLVLLSFGIASFVGTSLSSFILKRSVKLALAGAPFVLALSALVLTLWGSYKIVATGVAIIWGLTFALIPVGWSTWITRSLADQAEKAGSIQVAVIQLANTCGAAIGGYALDNIGLTSPLMLSGTLMLLTALLVTAKVKMKKS</sequence>
<reference key="1">
    <citation type="journal article" date="2002" name="Proc. Natl. Acad. Sci. U.S.A.">
        <title>Extensive mosaic structure revealed by the complete genome sequence of uropathogenic Escherichia coli.</title>
        <authorList>
            <person name="Welch R.A."/>
            <person name="Burland V."/>
            <person name="Plunkett G. III"/>
            <person name="Redford P."/>
            <person name="Roesch P."/>
            <person name="Rasko D."/>
            <person name="Buckles E.L."/>
            <person name="Liou S.-R."/>
            <person name="Boutin A."/>
            <person name="Hackett J."/>
            <person name="Stroud D."/>
            <person name="Mayhew G.F."/>
            <person name="Rose D.J."/>
            <person name="Zhou S."/>
            <person name="Schwartz D.C."/>
            <person name="Perna N.T."/>
            <person name="Mobley H.L.T."/>
            <person name="Donnenberg M.S."/>
            <person name="Blattner F.R."/>
        </authorList>
    </citation>
    <scope>NUCLEOTIDE SEQUENCE [LARGE SCALE GENOMIC DNA]</scope>
    <source>
        <strain>CFT073 / ATCC 700928 / UPEC</strain>
    </source>
</reference>
<name>NEPI_ECOL6</name>
<dbReference type="EMBL" id="AE014075">
    <property type="protein sequence ID" value="AAN83020.1"/>
    <property type="status" value="ALT_INIT"/>
    <property type="molecule type" value="Genomic_DNA"/>
</dbReference>
<dbReference type="RefSeq" id="WP_011076685.1">
    <property type="nucleotide sequence ID" value="NZ_CP051263.1"/>
</dbReference>
<dbReference type="SMR" id="Q8FBX9"/>
<dbReference type="STRING" id="199310.c4586"/>
<dbReference type="KEGG" id="ecc:c4586"/>
<dbReference type="eggNOG" id="COG2814">
    <property type="taxonomic scope" value="Bacteria"/>
</dbReference>
<dbReference type="HOGENOM" id="CLU_001265_61_1_6"/>
<dbReference type="Proteomes" id="UP000001410">
    <property type="component" value="Chromosome"/>
</dbReference>
<dbReference type="GO" id="GO:0005886">
    <property type="term" value="C:plasma membrane"/>
    <property type="evidence" value="ECO:0007669"/>
    <property type="project" value="UniProtKB-SubCell"/>
</dbReference>
<dbReference type="GO" id="GO:0015297">
    <property type="term" value="F:antiporter activity"/>
    <property type="evidence" value="ECO:0007669"/>
    <property type="project" value="UniProtKB-KW"/>
</dbReference>
<dbReference type="GO" id="GO:0015211">
    <property type="term" value="F:purine nucleoside transmembrane transporter activity"/>
    <property type="evidence" value="ECO:0007669"/>
    <property type="project" value="UniProtKB-UniRule"/>
</dbReference>
<dbReference type="CDD" id="cd17324">
    <property type="entry name" value="MFS_NepI_like"/>
    <property type="match status" value="1"/>
</dbReference>
<dbReference type="FunFam" id="1.20.1250.20:FF:000113">
    <property type="entry name" value="Purine ribonucleoside efflux pump NepI"/>
    <property type="match status" value="1"/>
</dbReference>
<dbReference type="Gene3D" id="1.20.1250.20">
    <property type="entry name" value="MFS general substrate transporter like domains"/>
    <property type="match status" value="1"/>
</dbReference>
<dbReference type="HAMAP" id="MF_01189">
    <property type="entry name" value="MFS_NepI"/>
    <property type="match status" value="1"/>
</dbReference>
<dbReference type="InterPro" id="IPR011701">
    <property type="entry name" value="MFS"/>
</dbReference>
<dbReference type="InterPro" id="IPR020846">
    <property type="entry name" value="MFS_dom"/>
</dbReference>
<dbReference type="InterPro" id="IPR050189">
    <property type="entry name" value="MFS_Efflux_Transporters"/>
</dbReference>
<dbReference type="InterPro" id="IPR023680">
    <property type="entry name" value="MFS_NepI"/>
</dbReference>
<dbReference type="InterPro" id="IPR036259">
    <property type="entry name" value="MFS_trans_sf"/>
</dbReference>
<dbReference type="NCBIfam" id="NF007578">
    <property type="entry name" value="PRK10213.1"/>
    <property type="match status" value="1"/>
</dbReference>
<dbReference type="PANTHER" id="PTHR43124">
    <property type="entry name" value="PURINE EFFLUX PUMP PBUE"/>
    <property type="match status" value="1"/>
</dbReference>
<dbReference type="PANTHER" id="PTHR43124:SF5">
    <property type="entry name" value="PURINE RIBONUCLEOSIDE EFFLUX PUMP NEPI"/>
    <property type="match status" value="1"/>
</dbReference>
<dbReference type="Pfam" id="PF07690">
    <property type="entry name" value="MFS_1"/>
    <property type="match status" value="1"/>
</dbReference>
<dbReference type="SUPFAM" id="SSF103473">
    <property type="entry name" value="MFS general substrate transporter"/>
    <property type="match status" value="1"/>
</dbReference>
<dbReference type="PROSITE" id="PS50850">
    <property type="entry name" value="MFS"/>
    <property type="match status" value="1"/>
</dbReference>
<organism>
    <name type="scientific">Escherichia coli O6:H1 (strain CFT073 / ATCC 700928 / UPEC)</name>
    <dbReference type="NCBI Taxonomy" id="199310"/>
    <lineage>
        <taxon>Bacteria</taxon>
        <taxon>Pseudomonadati</taxon>
        <taxon>Pseudomonadota</taxon>
        <taxon>Gammaproteobacteria</taxon>
        <taxon>Enterobacterales</taxon>
        <taxon>Enterobacteriaceae</taxon>
        <taxon>Escherichia</taxon>
    </lineage>
</organism>
<comment type="function">
    <text evidence="1">Involved in the efflux of purine ribonucleosides, such as inosine and guanosine.</text>
</comment>
<comment type="catalytic activity">
    <reaction evidence="1">
        <text>inosine(in) + H(+)(out) = inosine(out) + H(+)(in)</text>
        <dbReference type="Rhea" id="RHEA:29211"/>
        <dbReference type="ChEBI" id="CHEBI:15378"/>
        <dbReference type="ChEBI" id="CHEBI:17596"/>
    </reaction>
    <physiologicalReaction direction="left-to-right" evidence="1">
        <dbReference type="Rhea" id="RHEA:29212"/>
    </physiologicalReaction>
</comment>
<comment type="catalytic activity">
    <reaction evidence="1">
        <text>guanosine(in) + H(+)(out) = guanosine(out) + H(+)(in)</text>
        <dbReference type="Rhea" id="RHEA:29583"/>
        <dbReference type="ChEBI" id="CHEBI:15378"/>
        <dbReference type="ChEBI" id="CHEBI:16750"/>
    </reaction>
    <physiologicalReaction direction="left-to-right" evidence="1">
        <dbReference type="Rhea" id="RHEA:29584"/>
    </physiologicalReaction>
</comment>
<comment type="subcellular location">
    <subcellularLocation>
        <location evidence="1">Cell inner membrane</location>
        <topology evidence="1">Multi-pass membrane protein</topology>
    </subcellularLocation>
</comment>
<comment type="similarity">
    <text evidence="1">Belongs to the major facilitator superfamily. DHA1 family. NepI (TC 2.A.1.2.26) subfamily.</text>
</comment>
<comment type="sequence caution" evidence="2">
    <conflict type="erroneous initiation">
        <sequence resource="EMBL-CDS" id="AAN83020"/>
    </conflict>
</comment>
<accession>Q8FBX9</accession>